<protein>
    <recommendedName>
        <fullName evidence="1">Elongation factor Ts</fullName>
        <shortName evidence="1">EF-Ts</shortName>
    </recommendedName>
</protein>
<proteinExistence type="inferred from homology"/>
<sequence>MAITAQMVKELREKTGAGMMDCKKALTETNGDMEKAIDFLREKGIAKAAKKADRIAAEGLTFIETNGNDGLILELNSETDFVAKNEGFQTLIKELAAHLLANKPANVEEAMAQTMENGKKVEEHINEAIAKIGEKLTLRRFEIVSKTDADAFGAYLHMGGRIGVLTVLEGSTDEAAAKDVAMHIAAVNPKYIDRDAVTAEEVEHERQVLTQQALNEGKPEKIVAKMVEGRLGKFFEEICLLDQAFVKNPDMKVRQFVESKGGTLKGFVRYAVGEGIEKREDNFAEEVMNQVKGSN</sequence>
<dbReference type="EMBL" id="CP000485">
    <property type="protein sequence ID" value="ABK86692.1"/>
    <property type="status" value="ALT_INIT"/>
    <property type="molecule type" value="Genomic_DNA"/>
</dbReference>
<dbReference type="RefSeq" id="WP_001018581.1">
    <property type="nucleotide sequence ID" value="NC_008600.1"/>
</dbReference>
<dbReference type="SMR" id="A0RHJ9"/>
<dbReference type="GeneID" id="45023654"/>
<dbReference type="KEGG" id="btl:BALH_3457"/>
<dbReference type="HOGENOM" id="CLU_047155_0_2_9"/>
<dbReference type="GO" id="GO:0005737">
    <property type="term" value="C:cytoplasm"/>
    <property type="evidence" value="ECO:0007669"/>
    <property type="project" value="UniProtKB-SubCell"/>
</dbReference>
<dbReference type="GO" id="GO:0003746">
    <property type="term" value="F:translation elongation factor activity"/>
    <property type="evidence" value="ECO:0007669"/>
    <property type="project" value="UniProtKB-UniRule"/>
</dbReference>
<dbReference type="CDD" id="cd14275">
    <property type="entry name" value="UBA_EF-Ts"/>
    <property type="match status" value="1"/>
</dbReference>
<dbReference type="FunFam" id="1.10.286.20:FF:000003">
    <property type="entry name" value="Elongation factor Ts"/>
    <property type="match status" value="1"/>
</dbReference>
<dbReference type="FunFam" id="1.10.8.10:FF:000001">
    <property type="entry name" value="Elongation factor Ts"/>
    <property type="match status" value="1"/>
</dbReference>
<dbReference type="FunFam" id="3.30.479.20:FF:000005">
    <property type="entry name" value="Elongation factor Ts"/>
    <property type="match status" value="1"/>
</dbReference>
<dbReference type="Gene3D" id="1.10.286.20">
    <property type="match status" value="1"/>
</dbReference>
<dbReference type="Gene3D" id="1.10.8.10">
    <property type="entry name" value="DNA helicase RuvA subunit, C-terminal domain"/>
    <property type="match status" value="1"/>
</dbReference>
<dbReference type="Gene3D" id="3.30.479.20">
    <property type="entry name" value="Elongation factor Ts, dimerisation domain"/>
    <property type="match status" value="2"/>
</dbReference>
<dbReference type="HAMAP" id="MF_00050">
    <property type="entry name" value="EF_Ts"/>
    <property type="match status" value="1"/>
</dbReference>
<dbReference type="InterPro" id="IPR036402">
    <property type="entry name" value="EF-Ts_dimer_sf"/>
</dbReference>
<dbReference type="InterPro" id="IPR001816">
    <property type="entry name" value="Transl_elong_EFTs/EF1B"/>
</dbReference>
<dbReference type="InterPro" id="IPR014039">
    <property type="entry name" value="Transl_elong_EFTs/EF1B_dimer"/>
</dbReference>
<dbReference type="InterPro" id="IPR018101">
    <property type="entry name" value="Transl_elong_Ts_CS"/>
</dbReference>
<dbReference type="InterPro" id="IPR009060">
    <property type="entry name" value="UBA-like_sf"/>
</dbReference>
<dbReference type="NCBIfam" id="TIGR00116">
    <property type="entry name" value="tsf"/>
    <property type="match status" value="1"/>
</dbReference>
<dbReference type="PANTHER" id="PTHR11741">
    <property type="entry name" value="ELONGATION FACTOR TS"/>
    <property type="match status" value="1"/>
</dbReference>
<dbReference type="PANTHER" id="PTHR11741:SF0">
    <property type="entry name" value="ELONGATION FACTOR TS, MITOCHONDRIAL"/>
    <property type="match status" value="1"/>
</dbReference>
<dbReference type="Pfam" id="PF00889">
    <property type="entry name" value="EF_TS"/>
    <property type="match status" value="1"/>
</dbReference>
<dbReference type="SUPFAM" id="SSF54713">
    <property type="entry name" value="Elongation factor Ts (EF-Ts), dimerisation domain"/>
    <property type="match status" value="2"/>
</dbReference>
<dbReference type="SUPFAM" id="SSF46934">
    <property type="entry name" value="UBA-like"/>
    <property type="match status" value="1"/>
</dbReference>
<dbReference type="PROSITE" id="PS01126">
    <property type="entry name" value="EF_TS_1"/>
    <property type="match status" value="1"/>
</dbReference>
<dbReference type="PROSITE" id="PS01127">
    <property type="entry name" value="EF_TS_2"/>
    <property type="match status" value="1"/>
</dbReference>
<accession>A0RHJ9</accession>
<keyword id="KW-0963">Cytoplasm</keyword>
<keyword id="KW-0251">Elongation factor</keyword>
<keyword id="KW-0648">Protein biosynthesis</keyword>
<feature type="chain" id="PRO_0000323442" description="Elongation factor Ts">
    <location>
        <begin position="1"/>
        <end position="295"/>
    </location>
</feature>
<feature type="region of interest" description="Involved in Mg(2+) ion dislocation from EF-Tu" evidence="1">
    <location>
        <begin position="79"/>
        <end position="82"/>
    </location>
</feature>
<reference key="1">
    <citation type="journal article" date="2007" name="J. Bacteriol.">
        <title>The complete genome sequence of Bacillus thuringiensis Al Hakam.</title>
        <authorList>
            <person name="Challacombe J.F."/>
            <person name="Altherr M.R."/>
            <person name="Xie G."/>
            <person name="Bhotika S.S."/>
            <person name="Brown N."/>
            <person name="Bruce D."/>
            <person name="Campbell C.S."/>
            <person name="Campbell M.L."/>
            <person name="Chen J."/>
            <person name="Chertkov O."/>
            <person name="Cleland C."/>
            <person name="Dimitrijevic M."/>
            <person name="Doggett N.A."/>
            <person name="Fawcett J.J."/>
            <person name="Glavina T."/>
            <person name="Goodwin L.A."/>
            <person name="Green L.D."/>
            <person name="Han C.S."/>
            <person name="Hill K.K."/>
            <person name="Hitchcock P."/>
            <person name="Jackson P.J."/>
            <person name="Keim P."/>
            <person name="Kewalramani A.R."/>
            <person name="Longmire J."/>
            <person name="Lucas S."/>
            <person name="Malfatti S."/>
            <person name="Martinez D."/>
            <person name="McMurry K."/>
            <person name="Meincke L.J."/>
            <person name="Misra M."/>
            <person name="Moseman B.L."/>
            <person name="Mundt M."/>
            <person name="Munk A.C."/>
            <person name="Okinaka R.T."/>
            <person name="Parson-Quintana B."/>
            <person name="Reilly L.P."/>
            <person name="Richardson P."/>
            <person name="Robinson D.L."/>
            <person name="Saunders E."/>
            <person name="Tapia R."/>
            <person name="Tesmer J.G."/>
            <person name="Thayer N."/>
            <person name="Thompson L.S."/>
            <person name="Tice H."/>
            <person name="Ticknor L.O."/>
            <person name="Wills P.L."/>
            <person name="Gilna P."/>
            <person name="Brettin T.S."/>
        </authorList>
    </citation>
    <scope>NUCLEOTIDE SEQUENCE [LARGE SCALE GENOMIC DNA]</scope>
    <source>
        <strain>Al Hakam</strain>
    </source>
</reference>
<organism>
    <name type="scientific">Bacillus thuringiensis (strain Al Hakam)</name>
    <dbReference type="NCBI Taxonomy" id="412694"/>
    <lineage>
        <taxon>Bacteria</taxon>
        <taxon>Bacillati</taxon>
        <taxon>Bacillota</taxon>
        <taxon>Bacilli</taxon>
        <taxon>Bacillales</taxon>
        <taxon>Bacillaceae</taxon>
        <taxon>Bacillus</taxon>
        <taxon>Bacillus cereus group</taxon>
    </lineage>
</organism>
<evidence type="ECO:0000255" key="1">
    <source>
        <dbReference type="HAMAP-Rule" id="MF_00050"/>
    </source>
</evidence>
<evidence type="ECO:0000305" key="2"/>
<gene>
    <name evidence="1" type="primary">tsf</name>
    <name type="ordered locus">BALH_3457</name>
</gene>
<name>EFTS_BACAH</name>
<comment type="function">
    <text evidence="1">Associates with the EF-Tu.GDP complex and induces the exchange of GDP to GTP. It remains bound to the aminoacyl-tRNA.EF-Tu.GTP complex up to the GTP hydrolysis stage on the ribosome.</text>
</comment>
<comment type="subcellular location">
    <subcellularLocation>
        <location evidence="1">Cytoplasm</location>
    </subcellularLocation>
</comment>
<comment type="similarity">
    <text evidence="1">Belongs to the EF-Ts family.</text>
</comment>
<comment type="sequence caution" evidence="2">
    <conflict type="erroneous initiation">
        <sequence resource="EMBL-CDS" id="ABK86692"/>
    </conflict>
</comment>